<keyword id="KW-1185">Reference proteome</keyword>
<keyword id="KW-0687">Ribonucleoprotein</keyword>
<keyword id="KW-0689">Ribosomal protein</keyword>
<keyword id="KW-0694">RNA-binding</keyword>
<keyword id="KW-0699">rRNA-binding</keyword>
<gene>
    <name evidence="1" type="primary">rpmE</name>
    <name type="ordered locus">SRU_1162</name>
</gene>
<dbReference type="EMBL" id="CP000159">
    <property type="protein sequence ID" value="ABC43609.1"/>
    <property type="molecule type" value="Genomic_DNA"/>
</dbReference>
<dbReference type="RefSeq" id="WP_011403916.1">
    <property type="nucleotide sequence ID" value="NC_007677.1"/>
</dbReference>
<dbReference type="RefSeq" id="YP_445288.1">
    <property type="nucleotide sequence ID" value="NC_007677.1"/>
</dbReference>
<dbReference type="SMR" id="Q2S3E3"/>
<dbReference type="STRING" id="309807.SRU_1162"/>
<dbReference type="EnsemblBacteria" id="ABC43609">
    <property type="protein sequence ID" value="ABC43609"/>
    <property type="gene ID" value="SRU_1162"/>
</dbReference>
<dbReference type="GeneID" id="83728069"/>
<dbReference type="KEGG" id="sru:SRU_1162"/>
<dbReference type="PATRIC" id="fig|309807.25.peg.1202"/>
<dbReference type="eggNOG" id="COG0254">
    <property type="taxonomic scope" value="Bacteria"/>
</dbReference>
<dbReference type="HOGENOM" id="CLU_114306_4_2_10"/>
<dbReference type="OrthoDB" id="9803251at2"/>
<dbReference type="Proteomes" id="UP000008674">
    <property type="component" value="Chromosome"/>
</dbReference>
<dbReference type="GO" id="GO:1990904">
    <property type="term" value="C:ribonucleoprotein complex"/>
    <property type="evidence" value="ECO:0007669"/>
    <property type="project" value="UniProtKB-KW"/>
</dbReference>
<dbReference type="GO" id="GO:0005840">
    <property type="term" value="C:ribosome"/>
    <property type="evidence" value="ECO:0007669"/>
    <property type="project" value="UniProtKB-KW"/>
</dbReference>
<dbReference type="GO" id="GO:0019843">
    <property type="term" value="F:rRNA binding"/>
    <property type="evidence" value="ECO:0007669"/>
    <property type="project" value="UniProtKB-KW"/>
</dbReference>
<dbReference type="GO" id="GO:0003735">
    <property type="term" value="F:structural constituent of ribosome"/>
    <property type="evidence" value="ECO:0007669"/>
    <property type="project" value="InterPro"/>
</dbReference>
<dbReference type="GO" id="GO:0006412">
    <property type="term" value="P:translation"/>
    <property type="evidence" value="ECO:0007669"/>
    <property type="project" value="UniProtKB-UniRule"/>
</dbReference>
<dbReference type="Gene3D" id="4.10.830.30">
    <property type="entry name" value="Ribosomal protein L31"/>
    <property type="match status" value="1"/>
</dbReference>
<dbReference type="HAMAP" id="MF_00501">
    <property type="entry name" value="Ribosomal_bL31_1"/>
    <property type="match status" value="1"/>
</dbReference>
<dbReference type="InterPro" id="IPR034704">
    <property type="entry name" value="Ribosomal_bL28/bL31-like_sf"/>
</dbReference>
<dbReference type="InterPro" id="IPR002150">
    <property type="entry name" value="Ribosomal_bL31"/>
</dbReference>
<dbReference type="InterPro" id="IPR027491">
    <property type="entry name" value="Ribosomal_bL31_A"/>
</dbReference>
<dbReference type="InterPro" id="IPR042105">
    <property type="entry name" value="Ribosomal_bL31_sf"/>
</dbReference>
<dbReference type="NCBIfam" id="TIGR00105">
    <property type="entry name" value="L31"/>
    <property type="match status" value="1"/>
</dbReference>
<dbReference type="NCBIfam" id="NF000612">
    <property type="entry name" value="PRK00019.1"/>
    <property type="match status" value="1"/>
</dbReference>
<dbReference type="NCBIfam" id="NF001809">
    <property type="entry name" value="PRK00528.1"/>
    <property type="match status" value="1"/>
</dbReference>
<dbReference type="PANTHER" id="PTHR33280">
    <property type="entry name" value="50S RIBOSOMAL PROTEIN L31, CHLOROPLASTIC"/>
    <property type="match status" value="1"/>
</dbReference>
<dbReference type="PANTHER" id="PTHR33280:SF1">
    <property type="entry name" value="LARGE RIBOSOMAL SUBUNIT PROTEIN BL31C"/>
    <property type="match status" value="1"/>
</dbReference>
<dbReference type="Pfam" id="PF01197">
    <property type="entry name" value="Ribosomal_L31"/>
    <property type="match status" value="1"/>
</dbReference>
<dbReference type="PRINTS" id="PR01249">
    <property type="entry name" value="RIBOSOMALL31"/>
</dbReference>
<dbReference type="SUPFAM" id="SSF143800">
    <property type="entry name" value="L28p-like"/>
    <property type="match status" value="1"/>
</dbReference>
<dbReference type="PROSITE" id="PS01143">
    <property type="entry name" value="RIBOSOMAL_L31"/>
    <property type="match status" value="1"/>
</dbReference>
<protein>
    <recommendedName>
        <fullName evidence="1">Large ribosomal subunit protein bL31</fullName>
    </recommendedName>
    <alternativeName>
        <fullName evidence="3">50S ribosomal protein L31</fullName>
    </alternativeName>
</protein>
<comment type="function">
    <text evidence="1">Binds the 23S rRNA.</text>
</comment>
<comment type="subunit">
    <text evidence="1">Part of the 50S ribosomal subunit.</text>
</comment>
<comment type="similarity">
    <text evidence="1">Belongs to the bacterial ribosomal protein bL31 family. Type A subfamily.</text>
</comment>
<sequence>MQHDLHPEYSEVTIQLADGSEITTRSTMETDSYETEVDSTNHPFYTGRRQFVDTAGRVEKFNRRYGLTDDDEGDDEETEDAADE</sequence>
<organism>
    <name type="scientific">Salinibacter ruber (strain DSM 13855 / M31)</name>
    <dbReference type="NCBI Taxonomy" id="309807"/>
    <lineage>
        <taxon>Bacteria</taxon>
        <taxon>Pseudomonadati</taxon>
        <taxon>Rhodothermota</taxon>
        <taxon>Rhodothermia</taxon>
        <taxon>Rhodothermales</taxon>
        <taxon>Salinibacteraceae</taxon>
        <taxon>Salinibacter</taxon>
    </lineage>
</organism>
<evidence type="ECO:0000255" key="1">
    <source>
        <dbReference type="HAMAP-Rule" id="MF_00501"/>
    </source>
</evidence>
<evidence type="ECO:0000256" key="2">
    <source>
        <dbReference type="SAM" id="MobiDB-lite"/>
    </source>
</evidence>
<evidence type="ECO:0000305" key="3"/>
<accession>Q2S3E3</accession>
<reference key="1">
    <citation type="journal article" date="2005" name="Proc. Natl. Acad. Sci. U.S.A.">
        <title>The genome of Salinibacter ruber: convergence and gene exchange among hyperhalophilic bacteria and archaea.</title>
        <authorList>
            <person name="Mongodin E.F."/>
            <person name="Nelson K.E."/>
            <person name="Daugherty S."/>
            <person name="DeBoy R.T."/>
            <person name="Wister J."/>
            <person name="Khouri H."/>
            <person name="Weidman J."/>
            <person name="Walsh D.A."/>
            <person name="Papke R.T."/>
            <person name="Sanchez Perez G."/>
            <person name="Sharma A.K."/>
            <person name="Nesbo C.L."/>
            <person name="MacLeod D."/>
            <person name="Bapteste E."/>
            <person name="Doolittle W.F."/>
            <person name="Charlebois R.L."/>
            <person name="Legault B."/>
            <person name="Rodriguez-Valera F."/>
        </authorList>
    </citation>
    <scope>NUCLEOTIDE SEQUENCE [LARGE SCALE GENOMIC DNA]</scope>
    <source>
        <strain>DSM 13855 / CECT 5946 / M31</strain>
    </source>
</reference>
<proteinExistence type="inferred from homology"/>
<name>RL31_SALRD</name>
<feature type="chain" id="PRO_0000259226" description="Large ribosomal subunit protein bL31">
    <location>
        <begin position="1"/>
        <end position="84"/>
    </location>
</feature>
<feature type="region of interest" description="Disordered" evidence="2">
    <location>
        <begin position="1"/>
        <end position="41"/>
    </location>
</feature>
<feature type="region of interest" description="Disordered" evidence="2">
    <location>
        <begin position="63"/>
        <end position="84"/>
    </location>
</feature>
<feature type="compositionally biased region" description="Polar residues" evidence="2">
    <location>
        <begin position="21"/>
        <end position="30"/>
    </location>
</feature>
<feature type="compositionally biased region" description="Acidic residues" evidence="2">
    <location>
        <begin position="68"/>
        <end position="84"/>
    </location>
</feature>